<protein>
    <recommendedName>
        <fullName evidence="1">Small ribosomal subunit protein uS8</fullName>
    </recommendedName>
    <alternativeName>
        <fullName evidence="2">30S ribosomal protein S8</fullName>
    </alternativeName>
</protein>
<evidence type="ECO:0000255" key="1">
    <source>
        <dbReference type="HAMAP-Rule" id="MF_01302"/>
    </source>
</evidence>
<evidence type="ECO:0000305" key="2"/>
<organism>
    <name type="scientific">Thermosynechococcus vestitus (strain NIES-2133 / IAM M-273 / BP-1)</name>
    <dbReference type="NCBI Taxonomy" id="197221"/>
    <lineage>
        <taxon>Bacteria</taxon>
        <taxon>Bacillati</taxon>
        <taxon>Cyanobacteriota</taxon>
        <taxon>Cyanophyceae</taxon>
        <taxon>Acaryochloridales</taxon>
        <taxon>Thermosynechococcaceae</taxon>
        <taxon>Thermosynechococcus</taxon>
    </lineage>
</organism>
<accession>Q8DML9</accession>
<sequence length="133" mass="14788">MAVNDTIGDMLTRIRNANLARHQTTTIPATRMTRSIAQVLKAEGFIRDFEEQGDGVKRHLVVSLKYRGKQRQPIITALKRVSKPGLRVYANSRELPRVLGGIGIAIISTSNGIMTDREARKQGIGGEVLCYVW</sequence>
<dbReference type="EMBL" id="BA000039">
    <property type="protein sequence ID" value="BAC07647.1"/>
    <property type="molecule type" value="Genomic_DNA"/>
</dbReference>
<dbReference type="RefSeq" id="NP_680885.1">
    <property type="nucleotide sequence ID" value="NC_004113.1"/>
</dbReference>
<dbReference type="RefSeq" id="WP_011055949.1">
    <property type="nucleotide sequence ID" value="NC_004113.1"/>
</dbReference>
<dbReference type="SMR" id="Q8DML9"/>
<dbReference type="STRING" id="197221.gene:10746672"/>
<dbReference type="EnsemblBacteria" id="BAC07647">
    <property type="protein sequence ID" value="BAC07647"/>
    <property type="gene ID" value="BAC07647"/>
</dbReference>
<dbReference type="KEGG" id="tel:tlr0094"/>
<dbReference type="PATRIC" id="fig|197221.4.peg.97"/>
<dbReference type="eggNOG" id="COG0096">
    <property type="taxonomic scope" value="Bacteria"/>
</dbReference>
<dbReference type="Proteomes" id="UP000000440">
    <property type="component" value="Chromosome"/>
</dbReference>
<dbReference type="GO" id="GO:1990904">
    <property type="term" value="C:ribonucleoprotein complex"/>
    <property type="evidence" value="ECO:0007669"/>
    <property type="project" value="UniProtKB-KW"/>
</dbReference>
<dbReference type="GO" id="GO:0005840">
    <property type="term" value="C:ribosome"/>
    <property type="evidence" value="ECO:0007669"/>
    <property type="project" value="UniProtKB-KW"/>
</dbReference>
<dbReference type="GO" id="GO:0019843">
    <property type="term" value="F:rRNA binding"/>
    <property type="evidence" value="ECO:0007669"/>
    <property type="project" value="UniProtKB-UniRule"/>
</dbReference>
<dbReference type="GO" id="GO:0003735">
    <property type="term" value="F:structural constituent of ribosome"/>
    <property type="evidence" value="ECO:0007669"/>
    <property type="project" value="InterPro"/>
</dbReference>
<dbReference type="GO" id="GO:0006412">
    <property type="term" value="P:translation"/>
    <property type="evidence" value="ECO:0007669"/>
    <property type="project" value="UniProtKB-UniRule"/>
</dbReference>
<dbReference type="FunFam" id="3.30.1370.30:FF:000002">
    <property type="entry name" value="30S ribosomal protein S8"/>
    <property type="match status" value="1"/>
</dbReference>
<dbReference type="FunFam" id="3.30.1490.10:FF:000001">
    <property type="entry name" value="30S ribosomal protein S8"/>
    <property type="match status" value="1"/>
</dbReference>
<dbReference type="Gene3D" id="3.30.1370.30">
    <property type="match status" value="1"/>
</dbReference>
<dbReference type="Gene3D" id="3.30.1490.10">
    <property type="match status" value="1"/>
</dbReference>
<dbReference type="HAMAP" id="MF_01302_B">
    <property type="entry name" value="Ribosomal_uS8_B"/>
    <property type="match status" value="1"/>
</dbReference>
<dbReference type="InterPro" id="IPR000630">
    <property type="entry name" value="Ribosomal_uS8"/>
</dbReference>
<dbReference type="InterPro" id="IPR047863">
    <property type="entry name" value="Ribosomal_uS8_CS"/>
</dbReference>
<dbReference type="InterPro" id="IPR035987">
    <property type="entry name" value="Ribosomal_uS8_sf"/>
</dbReference>
<dbReference type="NCBIfam" id="NF001109">
    <property type="entry name" value="PRK00136.1"/>
    <property type="match status" value="1"/>
</dbReference>
<dbReference type="PANTHER" id="PTHR11758">
    <property type="entry name" value="40S RIBOSOMAL PROTEIN S15A"/>
    <property type="match status" value="1"/>
</dbReference>
<dbReference type="Pfam" id="PF00410">
    <property type="entry name" value="Ribosomal_S8"/>
    <property type="match status" value="1"/>
</dbReference>
<dbReference type="SUPFAM" id="SSF56047">
    <property type="entry name" value="Ribosomal protein S8"/>
    <property type="match status" value="1"/>
</dbReference>
<dbReference type="PROSITE" id="PS00053">
    <property type="entry name" value="RIBOSOMAL_S8"/>
    <property type="match status" value="1"/>
</dbReference>
<feature type="chain" id="PRO_0000126505" description="Small ribosomal subunit protein uS8">
    <location>
        <begin position="1"/>
        <end position="133"/>
    </location>
</feature>
<comment type="function">
    <text evidence="1">One of the primary rRNA binding proteins, it binds directly to 16S rRNA central domain where it helps coordinate assembly of the platform of the 30S subunit.</text>
</comment>
<comment type="subunit">
    <text evidence="1">Part of the 30S ribosomal subunit. Contacts proteins S5 and S12.</text>
</comment>
<comment type="similarity">
    <text evidence="1">Belongs to the universal ribosomal protein uS8 family.</text>
</comment>
<proteinExistence type="inferred from homology"/>
<name>RS8_THEVB</name>
<gene>
    <name evidence="1" type="primary">rpsH</name>
    <name evidence="1" type="synonym">rps8</name>
    <name type="ordered locus">tlr0094</name>
</gene>
<keyword id="KW-1185">Reference proteome</keyword>
<keyword id="KW-0687">Ribonucleoprotein</keyword>
<keyword id="KW-0689">Ribosomal protein</keyword>
<keyword id="KW-0694">RNA-binding</keyword>
<keyword id="KW-0699">rRNA-binding</keyword>
<reference key="1">
    <citation type="journal article" date="2002" name="DNA Res.">
        <title>Complete genome structure of the thermophilic cyanobacterium Thermosynechococcus elongatus BP-1.</title>
        <authorList>
            <person name="Nakamura Y."/>
            <person name="Kaneko T."/>
            <person name="Sato S."/>
            <person name="Ikeuchi M."/>
            <person name="Katoh H."/>
            <person name="Sasamoto S."/>
            <person name="Watanabe A."/>
            <person name="Iriguchi M."/>
            <person name="Kawashima K."/>
            <person name="Kimura T."/>
            <person name="Kishida Y."/>
            <person name="Kiyokawa C."/>
            <person name="Kohara M."/>
            <person name="Matsumoto M."/>
            <person name="Matsuno A."/>
            <person name="Nakazaki N."/>
            <person name="Shimpo S."/>
            <person name="Sugimoto M."/>
            <person name="Takeuchi C."/>
            <person name="Yamada M."/>
            <person name="Tabata S."/>
        </authorList>
    </citation>
    <scope>NUCLEOTIDE SEQUENCE [LARGE SCALE GENOMIC DNA]</scope>
    <source>
        <strain>NIES-2133 / IAM M-273 / BP-1</strain>
    </source>
</reference>